<comment type="function">
    <text evidence="1">Presumably involved in regulating the intracellular acetyl-CoA pool for fatty acid and cholesterol synthesis and fatty acid oxidation.</text>
</comment>
<comment type="catalytic activity">
    <reaction>
        <text>acetyl-CoA + H2O = acetate + CoA + H(+)</text>
        <dbReference type="Rhea" id="RHEA:20289"/>
        <dbReference type="ChEBI" id="CHEBI:15377"/>
        <dbReference type="ChEBI" id="CHEBI:15378"/>
        <dbReference type="ChEBI" id="CHEBI:30089"/>
        <dbReference type="ChEBI" id="CHEBI:57287"/>
        <dbReference type="ChEBI" id="CHEBI:57288"/>
        <dbReference type="EC" id="3.1.2.1"/>
    </reaction>
</comment>
<comment type="subcellular location">
    <subcellularLocation>
        <location evidence="1">Cytoplasm</location>
    </subcellularLocation>
</comment>
<comment type="similarity">
    <text evidence="3">Belongs to the acetyl-CoA hydrolase/transferase family.</text>
</comment>
<sequence length="523" mass="58265">MTVSRLLKDRVRYAPYLKKVKPVEELIPLFKDGQYIGWSGFTGVGAPKAVPEALIKHVEENNLQGKLRFNLFVGASAGPEECKWAEHDMILRRAPHQVGKPIAKAINDGRIQFFDKHLSMFPQDLTYGYYSRNRTDGKILDYTIIEATAIKEDGSIVPGPSVGGSPEFISVSDKIIIEVNTATPSFEGLHDIDMPVNPPFRQPYPYTAVDQKNGLDSIPVDPERVVAVVESTQRDVVGPNTPSDATSQSIARHLVEFFENEVRHGRLPENLHPLQSGIGNIANAVIEGLTDSSFKNLTVWTEVLQDSFLDLFENGALDYATATSIRLTEAGFQKFFDNWDDFSKKLCLRSQVVSNNPELIRRLGVIAMNTPVEVDIYAHANSTNVSGSRMLNGLGGSADFLRNAKLSIMHAPAARPTKTDPTGISTIVPMASHVDQTEHDLDVLVTDQGLADLRGLSPRERAREIIKNCAHPDYQPILTDYLDRSEHYAKLHKCMHEPHMLKNAFKFHLNLSEKGTMKVDNWD</sequence>
<organism>
    <name type="scientific">Kluyveromyces lactis (strain ATCC 8585 / CBS 2359 / DSM 70799 / NBRC 1267 / NRRL Y-1140 / WM37)</name>
    <name type="common">Yeast</name>
    <name type="synonym">Candida sphaerica</name>
    <dbReference type="NCBI Taxonomy" id="284590"/>
    <lineage>
        <taxon>Eukaryota</taxon>
        <taxon>Fungi</taxon>
        <taxon>Dikarya</taxon>
        <taxon>Ascomycota</taxon>
        <taxon>Saccharomycotina</taxon>
        <taxon>Saccharomycetes</taxon>
        <taxon>Saccharomycetales</taxon>
        <taxon>Saccharomycetaceae</taxon>
        <taxon>Kluyveromyces</taxon>
    </lineage>
</organism>
<proteinExistence type="inferred from homology"/>
<gene>
    <name type="primary">ACH1</name>
    <name type="ordered locus">KLLA0E10549g</name>
</gene>
<reference key="1">
    <citation type="journal article" date="2004" name="Nature">
        <title>Genome evolution in yeasts.</title>
        <authorList>
            <person name="Dujon B."/>
            <person name="Sherman D."/>
            <person name="Fischer G."/>
            <person name="Durrens P."/>
            <person name="Casaregola S."/>
            <person name="Lafontaine I."/>
            <person name="de Montigny J."/>
            <person name="Marck C."/>
            <person name="Neuveglise C."/>
            <person name="Talla E."/>
            <person name="Goffard N."/>
            <person name="Frangeul L."/>
            <person name="Aigle M."/>
            <person name="Anthouard V."/>
            <person name="Babour A."/>
            <person name="Barbe V."/>
            <person name="Barnay S."/>
            <person name="Blanchin S."/>
            <person name="Beckerich J.-M."/>
            <person name="Beyne E."/>
            <person name="Bleykasten C."/>
            <person name="Boisrame A."/>
            <person name="Boyer J."/>
            <person name="Cattolico L."/>
            <person name="Confanioleri F."/>
            <person name="de Daruvar A."/>
            <person name="Despons L."/>
            <person name="Fabre E."/>
            <person name="Fairhead C."/>
            <person name="Ferry-Dumazet H."/>
            <person name="Groppi A."/>
            <person name="Hantraye F."/>
            <person name="Hennequin C."/>
            <person name="Jauniaux N."/>
            <person name="Joyet P."/>
            <person name="Kachouri R."/>
            <person name="Kerrest A."/>
            <person name="Koszul R."/>
            <person name="Lemaire M."/>
            <person name="Lesur I."/>
            <person name="Ma L."/>
            <person name="Muller H."/>
            <person name="Nicaud J.-M."/>
            <person name="Nikolski M."/>
            <person name="Oztas S."/>
            <person name="Ozier-Kalogeropoulos O."/>
            <person name="Pellenz S."/>
            <person name="Potier S."/>
            <person name="Richard G.-F."/>
            <person name="Straub M.-L."/>
            <person name="Suleau A."/>
            <person name="Swennen D."/>
            <person name="Tekaia F."/>
            <person name="Wesolowski-Louvel M."/>
            <person name="Westhof E."/>
            <person name="Wirth B."/>
            <person name="Zeniou-Meyer M."/>
            <person name="Zivanovic Y."/>
            <person name="Bolotin-Fukuhara M."/>
            <person name="Thierry A."/>
            <person name="Bouchier C."/>
            <person name="Caudron B."/>
            <person name="Scarpelli C."/>
            <person name="Gaillardin C."/>
            <person name="Weissenbach J."/>
            <person name="Wincker P."/>
            <person name="Souciet J.-L."/>
        </authorList>
    </citation>
    <scope>NUCLEOTIDE SEQUENCE [LARGE SCALE GENOMIC DNA]</scope>
    <source>
        <strain>ATCC 8585 / CBS 2359 / DSM 70799 / NBRC 1267 / NRRL Y-1140 / WM37</strain>
    </source>
</reference>
<protein>
    <recommendedName>
        <fullName>Acetyl-CoA hydrolase</fullName>
        <ecNumber>3.1.2.1</ecNumber>
    </recommendedName>
    <alternativeName>
        <fullName>Acetyl-CoA deacylase</fullName>
        <shortName>Acetyl-CoA acylase</shortName>
    </alternativeName>
</protein>
<keyword id="KW-0963">Cytoplasm</keyword>
<keyword id="KW-0378">Hydrolase</keyword>
<keyword id="KW-1185">Reference proteome</keyword>
<evidence type="ECO:0000250" key="1"/>
<evidence type="ECO:0000250" key="2">
    <source>
        <dbReference type="UniProtKB" id="B3EY95"/>
    </source>
</evidence>
<evidence type="ECO:0000305" key="3"/>
<feature type="chain" id="PRO_0000215520" description="Acetyl-CoA hydrolase">
    <location>
        <begin position="1"/>
        <end position="523"/>
    </location>
</feature>
<feature type="active site" description="5-glutamyl coenzyme A thioester intermediate" evidence="2">
    <location>
        <position position="302"/>
    </location>
</feature>
<feature type="binding site" evidence="2">
    <location>
        <begin position="277"/>
        <end position="281"/>
    </location>
    <ligand>
        <name>CoA</name>
        <dbReference type="ChEBI" id="CHEBI:57287"/>
    </ligand>
</feature>
<feature type="binding site" evidence="2">
    <location>
        <position position="392"/>
    </location>
    <ligand>
        <name>CoA</name>
        <dbReference type="ChEBI" id="CHEBI:57287"/>
    </ligand>
</feature>
<feature type="binding site" evidence="2">
    <location>
        <position position="396"/>
    </location>
    <ligand>
        <name>CoA</name>
        <dbReference type="ChEBI" id="CHEBI:57287"/>
    </ligand>
</feature>
<dbReference type="EC" id="3.1.2.1"/>
<dbReference type="EMBL" id="CR382125">
    <property type="protein sequence ID" value="CAG99514.1"/>
    <property type="molecule type" value="Genomic_DNA"/>
</dbReference>
<dbReference type="RefSeq" id="XP_454427.1">
    <property type="nucleotide sequence ID" value="XM_454427.1"/>
</dbReference>
<dbReference type="SMR" id="Q6CNR2"/>
<dbReference type="FunCoup" id="Q6CNR2">
    <property type="interactions" value="243"/>
</dbReference>
<dbReference type="STRING" id="284590.Q6CNR2"/>
<dbReference type="PaxDb" id="284590-Q6CNR2"/>
<dbReference type="KEGG" id="kla:KLLA0_E10561g"/>
<dbReference type="eggNOG" id="KOG2828">
    <property type="taxonomic scope" value="Eukaryota"/>
</dbReference>
<dbReference type="HOGENOM" id="CLU_019748_3_0_1"/>
<dbReference type="InParanoid" id="Q6CNR2"/>
<dbReference type="OMA" id="SCIVPMV"/>
<dbReference type="Proteomes" id="UP000000598">
    <property type="component" value="Chromosome E"/>
</dbReference>
<dbReference type="GO" id="GO:0005739">
    <property type="term" value="C:mitochondrion"/>
    <property type="evidence" value="ECO:0007669"/>
    <property type="project" value="TreeGrafter"/>
</dbReference>
<dbReference type="GO" id="GO:0008775">
    <property type="term" value="F:acetate CoA-transferase activity"/>
    <property type="evidence" value="ECO:0007669"/>
    <property type="project" value="InterPro"/>
</dbReference>
<dbReference type="GO" id="GO:0003986">
    <property type="term" value="F:acetyl-CoA hydrolase activity"/>
    <property type="evidence" value="ECO:0007669"/>
    <property type="project" value="UniProtKB-EC"/>
</dbReference>
<dbReference type="GO" id="GO:0006083">
    <property type="term" value="P:acetate metabolic process"/>
    <property type="evidence" value="ECO:0007669"/>
    <property type="project" value="InterPro"/>
</dbReference>
<dbReference type="FunFam" id="3.30.750.70:FF:000002">
    <property type="entry name" value="Acetyl-CoA hydrolase Ach1"/>
    <property type="match status" value="1"/>
</dbReference>
<dbReference type="FunFam" id="3.40.1080.20:FF:000001">
    <property type="entry name" value="Acetyl-CoA hydrolase Ach1"/>
    <property type="match status" value="1"/>
</dbReference>
<dbReference type="FunFam" id="3.40.1080.10:FF:000003">
    <property type="entry name" value="Acetyl-coA hydrolase Ach1"/>
    <property type="match status" value="1"/>
</dbReference>
<dbReference type="Gene3D" id="3.30.750.70">
    <property type="entry name" value="4-hydroxybutyrate coenzyme like domains"/>
    <property type="match status" value="1"/>
</dbReference>
<dbReference type="Gene3D" id="3.40.1080.20">
    <property type="entry name" value="Acetyl-CoA hydrolase/transferase C-terminal domain"/>
    <property type="match status" value="1"/>
</dbReference>
<dbReference type="Gene3D" id="3.40.1080.10">
    <property type="entry name" value="Glutaconate Coenzyme A-transferase"/>
    <property type="match status" value="1"/>
</dbReference>
<dbReference type="InterPro" id="IPR026888">
    <property type="entry name" value="AcetylCoA_hyd_C"/>
</dbReference>
<dbReference type="InterPro" id="IPR038460">
    <property type="entry name" value="AcetylCoA_hyd_C_sf"/>
</dbReference>
<dbReference type="InterPro" id="IPR046433">
    <property type="entry name" value="ActCoA_hydro"/>
</dbReference>
<dbReference type="InterPro" id="IPR003702">
    <property type="entry name" value="ActCoA_hydro_N"/>
</dbReference>
<dbReference type="InterPro" id="IPR037171">
    <property type="entry name" value="NagB/RpiA_transferase-like"/>
</dbReference>
<dbReference type="PANTHER" id="PTHR43609">
    <property type="entry name" value="ACETYL-COA HYDROLASE"/>
    <property type="match status" value="1"/>
</dbReference>
<dbReference type="PANTHER" id="PTHR43609:SF1">
    <property type="entry name" value="ACETYL-COA HYDROLASE"/>
    <property type="match status" value="1"/>
</dbReference>
<dbReference type="Pfam" id="PF13336">
    <property type="entry name" value="AcetylCoA_hyd_C"/>
    <property type="match status" value="1"/>
</dbReference>
<dbReference type="Pfam" id="PF02550">
    <property type="entry name" value="AcetylCoA_hydro"/>
    <property type="match status" value="1"/>
</dbReference>
<dbReference type="SUPFAM" id="SSF100950">
    <property type="entry name" value="NagB/RpiA/CoA transferase-like"/>
    <property type="match status" value="2"/>
</dbReference>
<name>ACH1_KLULA</name>
<accession>Q6CNR2</accession>